<dbReference type="EMBL" id="AF268195">
    <property type="protein sequence ID" value="AAG44738.1"/>
    <property type="molecule type" value="mRNA"/>
</dbReference>
<dbReference type="EMBL" id="AK029595">
    <property type="protein sequence ID" value="BAC26526.1"/>
    <property type="molecule type" value="mRNA"/>
</dbReference>
<dbReference type="EMBL" id="AK033347">
    <property type="protein sequence ID" value="BAC28241.1"/>
    <property type="molecule type" value="mRNA"/>
</dbReference>
<dbReference type="EMBL" id="AK036064">
    <property type="protein sequence ID" value="BAC29294.1"/>
    <property type="molecule type" value="mRNA"/>
</dbReference>
<dbReference type="EMBL" id="AK136255">
    <property type="protein sequence ID" value="BAE22898.1"/>
    <property type="molecule type" value="mRNA"/>
</dbReference>
<dbReference type="EMBL" id="BC018512">
    <property type="protein sequence ID" value="AAH18512.1"/>
    <property type="molecule type" value="mRNA"/>
</dbReference>
<dbReference type="CCDS" id="CCDS17266.1"/>
<dbReference type="RefSeq" id="NP_109657.2">
    <property type="nucleotide sequence ID" value="NM_030732.3"/>
</dbReference>
<dbReference type="RefSeq" id="XP_006535642.1">
    <property type="nucleotide sequence ID" value="XM_006535579.4"/>
</dbReference>
<dbReference type="RefSeq" id="XP_006535643.1">
    <property type="nucleotide sequence ID" value="XM_006535580.5"/>
</dbReference>
<dbReference type="RefSeq" id="XP_011248020.1">
    <property type="nucleotide sequence ID" value="XM_011249718.4"/>
</dbReference>
<dbReference type="RefSeq" id="XP_011248021.1">
    <property type="nucleotide sequence ID" value="XM_011249719.2"/>
</dbReference>
<dbReference type="RefSeq" id="XP_011248023.1">
    <property type="nucleotide sequence ID" value="XM_011249721.4"/>
</dbReference>
<dbReference type="RefSeq" id="XP_017175306.1">
    <property type="nucleotide sequence ID" value="XM_017319817.2"/>
</dbReference>
<dbReference type="RefSeq" id="XP_030108780.1">
    <property type="nucleotide sequence ID" value="XM_030252920.2"/>
</dbReference>
<dbReference type="PDB" id="5NAF">
    <property type="method" value="X-ray"/>
    <property type="resolution" value="2.49 A"/>
    <property type="chains" value="A/B/C/D=134-514"/>
</dbReference>
<dbReference type="PDBsum" id="5NAF"/>
<dbReference type="SMR" id="Q8BHJ5"/>
<dbReference type="BioGRID" id="219863">
    <property type="interactions" value="6"/>
</dbReference>
<dbReference type="DIP" id="DIP-38606N"/>
<dbReference type="FunCoup" id="Q8BHJ5">
    <property type="interactions" value="3513"/>
</dbReference>
<dbReference type="IntAct" id="Q8BHJ5">
    <property type="interactions" value="7"/>
</dbReference>
<dbReference type="MINT" id="Q8BHJ5"/>
<dbReference type="STRING" id="10090.ENSMUSP00000142184"/>
<dbReference type="GlyGen" id="Q8BHJ5">
    <property type="glycosylation" value="1 site, 1 O-linked glycan (1 site)"/>
</dbReference>
<dbReference type="iPTMnet" id="Q8BHJ5"/>
<dbReference type="PhosphoSitePlus" id="Q8BHJ5"/>
<dbReference type="SwissPalm" id="Q8BHJ5"/>
<dbReference type="PaxDb" id="10090-ENSMUSP00000067164"/>
<dbReference type="PeptideAtlas" id="Q8BHJ5"/>
<dbReference type="ProteomicsDB" id="263011"/>
<dbReference type="Pumba" id="Q8BHJ5"/>
<dbReference type="Antibodypedia" id="9317">
    <property type="antibodies" value="372 antibodies from 33 providers"/>
</dbReference>
<dbReference type="DNASU" id="81004"/>
<dbReference type="Ensembl" id="ENSMUST00000063988.14">
    <property type="protein sequence ID" value="ENSMUSP00000067164.9"/>
    <property type="gene ID" value="ENSMUSG00000027630.14"/>
</dbReference>
<dbReference type="Ensembl" id="ENSMUST00000192328.5">
    <property type="protein sequence ID" value="ENSMUSP00000141363.2"/>
    <property type="gene ID" value="ENSMUSG00000027630.14"/>
</dbReference>
<dbReference type="Ensembl" id="ENSMUST00000193734.6">
    <property type="protein sequence ID" value="ENSMUSP00000142184.2"/>
    <property type="gene ID" value="ENSMUSG00000027630.14"/>
</dbReference>
<dbReference type="Ensembl" id="ENSMUST00000202747.4">
    <property type="protein sequence ID" value="ENSMUSP00000144436.2"/>
    <property type="gene ID" value="ENSMUSG00000027630.14"/>
</dbReference>
<dbReference type="GeneID" id="81004"/>
<dbReference type="KEGG" id="mmu:81004"/>
<dbReference type="UCSC" id="uc008osw.1">
    <property type="organism name" value="mouse"/>
</dbReference>
<dbReference type="AGR" id="MGI:2441730"/>
<dbReference type="CTD" id="79718"/>
<dbReference type="MGI" id="MGI:2441730">
    <property type="gene designation" value="Tbl1xr1"/>
</dbReference>
<dbReference type="VEuPathDB" id="HostDB:ENSMUSG00000027630"/>
<dbReference type="eggNOG" id="KOG0273">
    <property type="taxonomic scope" value="Eukaryota"/>
</dbReference>
<dbReference type="GeneTree" id="ENSGT00940000153421"/>
<dbReference type="HOGENOM" id="CLU_007609_2_0_1"/>
<dbReference type="InParanoid" id="Q8BHJ5"/>
<dbReference type="OMA" id="GENQPIK"/>
<dbReference type="OrthoDB" id="1367865at2759"/>
<dbReference type="PhylomeDB" id="Q8BHJ5"/>
<dbReference type="TreeFam" id="TF323190"/>
<dbReference type="Reactome" id="R-MMU-3214815">
    <property type="pathway name" value="HDACs deacetylate histones"/>
</dbReference>
<dbReference type="Reactome" id="R-MMU-350054">
    <property type="pathway name" value="Notch-HLH transcription pathway"/>
</dbReference>
<dbReference type="Reactome" id="R-MMU-400206">
    <property type="pathway name" value="Regulation of lipid metabolism by PPARalpha"/>
</dbReference>
<dbReference type="Reactome" id="R-MMU-9029569">
    <property type="pathway name" value="NR1H3 &amp; NR1H2 regulate gene expression linked to cholesterol transport and efflux"/>
</dbReference>
<dbReference type="Reactome" id="R-MMU-9707564">
    <property type="pathway name" value="Cytoprotection by HMOX1"/>
</dbReference>
<dbReference type="Reactome" id="R-MMU-9841922">
    <property type="pathway name" value="MLL4 and MLL3 complexes regulate expression of PPARG target genes in adipogenesis and hepatic steatosis"/>
</dbReference>
<dbReference type="BioGRID-ORCS" id="81004">
    <property type="hits" value="5 hits in 85 CRISPR screens"/>
</dbReference>
<dbReference type="ChiTaRS" id="Tbl1xr1">
    <property type="organism name" value="mouse"/>
</dbReference>
<dbReference type="PRO" id="PR:Q8BHJ5"/>
<dbReference type="Proteomes" id="UP000000589">
    <property type="component" value="Chromosome 3"/>
</dbReference>
<dbReference type="RNAct" id="Q8BHJ5">
    <property type="molecule type" value="protein"/>
</dbReference>
<dbReference type="Bgee" id="ENSMUSG00000027630">
    <property type="expression patterns" value="Expressed in metanephric mesenchyme and 260 other cell types or tissues"/>
</dbReference>
<dbReference type="ExpressionAtlas" id="Q8BHJ5">
    <property type="expression patterns" value="baseline and differential"/>
</dbReference>
<dbReference type="GO" id="GO:0000118">
    <property type="term" value="C:histone deacetylase complex"/>
    <property type="evidence" value="ECO:0007669"/>
    <property type="project" value="Ensembl"/>
</dbReference>
<dbReference type="GO" id="GO:0072686">
    <property type="term" value="C:mitotic spindle"/>
    <property type="evidence" value="ECO:0007669"/>
    <property type="project" value="Ensembl"/>
</dbReference>
<dbReference type="GO" id="GO:0005654">
    <property type="term" value="C:nucleoplasm"/>
    <property type="evidence" value="ECO:0000304"/>
    <property type="project" value="Reactome"/>
</dbReference>
<dbReference type="GO" id="GO:0005634">
    <property type="term" value="C:nucleus"/>
    <property type="evidence" value="ECO:0000305"/>
    <property type="project" value="MGI"/>
</dbReference>
<dbReference type="GO" id="GO:0017053">
    <property type="term" value="C:transcription repressor complex"/>
    <property type="evidence" value="ECO:0007669"/>
    <property type="project" value="Ensembl"/>
</dbReference>
<dbReference type="GO" id="GO:0008013">
    <property type="term" value="F:beta-catenin binding"/>
    <property type="evidence" value="ECO:0007669"/>
    <property type="project" value="Ensembl"/>
</dbReference>
<dbReference type="GO" id="GO:0003677">
    <property type="term" value="F:DNA binding"/>
    <property type="evidence" value="ECO:0000314"/>
    <property type="project" value="MGI"/>
</dbReference>
<dbReference type="GO" id="GO:0042393">
    <property type="term" value="F:histone binding"/>
    <property type="evidence" value="ECO:0007669"/>
    <property type="project" value="Ensembl"/>
</dbReference>
<dbReference type="GO" id="GO:0000976">
    <property type="term" value="F:transcription cis-regulatory region binding"/>
    <property type="evidence" value="ECO:0000314"/>
    <property type="project" value="BHF-UCL"/>
</dbReference>
<dbReference type="GO" id="GO:0003714">
    <property type="term" value="F:transcription corepressor activity"/>
    <property type="evidence" value="ECO:0000315"/>
    <property type="project" value="MGI"/>
</dbReference>
<dbReference type="GO" id="GO:0060612">
    <property type="term" value="P:adipose tissue development"/>
    <property type="evidence" value="ECO:0000315"/>
    <property type="project" value="MGI"/>
</dbReference>
<dbReference type="GO" id="GO:0001835">
    <property type="term" value="P:blastocyst hatching"/>
    <property type="evidence" value="ECO:0000315"/>
    <property type="project" value="MGI"/>
</dbReference>
<dbReference type="GO" id="GO:0006325">
    <property type="term" value="P:chromatin organization"/>
    <property type="evidence" value="ECO:0007669"/>
    <property type="project" value="UniProtKB-KW"/>
</dbReference>
<dbReference type="GO" id="GO:0060613">
    <property type="term" value="P:fat pad development"/>
    <property type="evidence" value="ECO:0000315"/>
    <property type="project" value="MGI"/>
</dbReference>
<dbReference type="GO" id="GO:0016042">
    <property type="term" value="P:lipid catabolic process"/>
    <property type="evidence" value="ECO:0000315"/>
    <property type="project" value="MGI"/>
</dbReference>
<dbReference type="GO" id="GO:0035264">
    <property type="term" value="P:multicellular organism growth"/>
    <property type="evidence" value="ECO:0000315"/>
    <property type="project" value="MGI"/>
</dbReference>
<dbReference type="GO" id="GO:0045892">
    <property type="term" value="P:negative regulation of DNA-templated transcription"/>
    <property type="evidence" value="ECO:0000315"/>
    <property type="project" value="MGI"/>
</dbReference>
<dbReference type="GO" id="GO:0000122">
    <property type="term" value="P:negative regulation of transcription by RNA polymerase II"/>
    <property type="evidence" value="ECO:0007669"/>
    <property type="project" value="Ensembl"/>
</dbReference>
<dbReference type="GO" id="GO:0090263">
    <property type="term" value="P:positive regulation of canonical Wnt signaling pathway"/>
    <property type="evidence" value="ECO:0007669"/>
    <property type="project" value="Ensembl"/>
</dbReference>
<dbReference type="GO" id="GO:0045944">
    <property type="term" value="P:positive regulation of transcription by RNA polymerase II"/>
    <property type="evidence" value="ECO:0000315"/>
    <property type="project" value="BHF-UCL"/>
</dbReference>
<dbReference type="GO" id="GO:0043161">
    <property type="term" value="P:proteasome-mediated ubiquitin-dependent protein catabolic process"/>
    <property type="evidence" value="ECO:0000315"/>
    <property type="project" value="MGI"/>
</dbReference>
<dbReference type="GO" id="GO:0010468">
    <property type="term" value="P:regulation of gene expression"/>
    <property type="evidence" value="ECO:0000315"/>
    <property type="project" value="MGI"/>
</dbReference>
<dbReference type="GO" id="GO:0090207">
    <property type="term" value="P:regulation of triglyceride metabolic process"/>
    <property type="evidence" value="ECO:0000315"/>
    <property type="project" value="MGI"/>
</dbReference>
<dbReference type="GO" id="GO:0002021">
    <property type="term" value="P:response to dietary excess"/>
    <property type="evidence" value="ECO:0000315"/>
    <property type="project" value="MGI"/>
</dbReference>
<dbReference type="GO" id="GO:0050872">
    <property type="term" value="P:white fat cell differentiation"/>
    <property type="evidence" value="ECO:0000315"/>
    <property type="project" value="MGI"/>
</dbReference>
<dbReference type="CDD" id="cd00200">
    <property type="entry name" value="WD40"/>
    <property type="match status" value="1"/>
</dbReference>
<dbReference type="FunFam" id="1.20.960.30:FF:000001">
    <property type="entry name" value="F-box-like/WD repeat-containing protein TBL1XR1"/>
    <property type="match status" value="1"/>
</dbReference>
<dbReference type="FunFam" id="2.130.10.10:FF:002234">
    <property type="entry name" value="F-box-like/WD repeat-containing protein TBL1XR1"/>
    <property type="match status" value="1"/>
</dbReference>
<dbReference type="Gene3D" id="1.20.960.30">
    <property type="match status" value="1"/>
</dbReference>
<dbReference type="Gene3D" id="2.130.10.10">
    <property type="entry name" value="YVTN repeat-like/Quinoprotein amine dehydrogenase"/>
    <property type="match status" value="1"/>
</dbReference>
<dbReference type="InterPro" id="IPR045183">
    <property type="entry name" value="Ebi-like"/>
</dbReference>
<dbReference type="InterPro" id="IPR020472">
    <property type="entry name" value="G-protein_beta_WD-40_rep"/>
</dbReference>
<dbReference type="InterPro" id="IPR006594">
    <property type="entry name" value="LisH"/>
</dbReference>
<dbReference type="InterPro" id="IPR015943">
    <property type="entry name" value="WD40/YVTN_repeat-like_dom_sf"/>
</dbReference>
<dbReference type="InterPro" id="IPR019775">
    <property type="entry name" value="WD40_repeat_CS"/>
</dbReference>
<dbReference type="InterPro" id="IPR036322">
    <property type="entry name" value="WD40_repeat_dom_sf"/>
</dbReference>
<dbReference type="InterPro" id="IPR001680">
    <property type="entry name" value="WD40_rpt"/>
</dbReference>
<dbReference type="PANTHER" id="PTHR22846:SF40">
    <property type="entry name" value="F-BOX-LIKE_WD REPEAT-CONTAINING PROTEIN TBL1XR1"/>
    <property type="match status" value="1"/>
</dbReference>
<dbReference type="PANTHER" id="PTHR22846">
    <property type="entry name" value="WD40 REPEAT PROTEIN"/>
    <property type="match status" value="1"/>
</dbReference>
<dbReference type="Pfam" id="PF08513">
    <property type="entry name" value="LisH"/>
    <property type="match status" value="1"/>
</dbReference>
<dbReference type="Pfam" id="PF00400">
    <property type="entry name" value="WD40"/>
    <property type="match status" value="6"/>
</dbReference>
<dbReference type="PRINTS" id="PR00320">
    <property type="entry name" value="GPROTEINBRPT"/>
</dbReference>
<dbReference type="SMART" id="SM00667">
    <property type="entry name" value="LisH"/>
    <property type="match status" value="1"/>
</dbReference>
<dbReference type="SMART" id="SM00320">
    <property type="entry name" value="WD40"/>
    <property type="match status" value="8"/>
</dbReference>
<dbReference type="SUPFAM" id="SSF50978">
    <property type="entry name" value="WD40 repeat-like"/>
    <property type="match status" value="1"/>
</dbReference>
<dbReference type="PROSITE" id="PS50896">
    <property type="entry name" value="LISH"/>
    <property type="match status" value="1"/>
</dbReference>
<dbReference type="PROSITE" id="PS00678">
    <property type="entry name" value="WD_REPEATS_1"/>
    <property type="match status" value="4"/>
</dbReference>
<dbReference type="PROSITE" id="PS50082">
    <property type="entry name" value="WD_REPEATS_2"/>
    <property type="match status" value="6"/>
</dbReference>
<dbReference type="PROSITE" id="PS50294">
    <property type="entry name" value="WD_REPEATS_REGION"/>
    <property type="match status" value="1"/>
</dbReference>
<proteinExistence type="evidence at protein level"/>
<name>TBL1R_MOUSE</name>
<gene>
    <name type="primary">Tbl1xr1</name>
    <name type="synonym">Ira1</name>
    <name type="synonym">Tblr1</name>
</gene>
<comment type="function">
    <text evidence="1">F-box-like protein involved in the recruitment of the ubiquitin/19S proteasome complex to nuclear receptor-regulated transcription units. Plays an essential role in transcription activation mediated by nuclear receptors. Probably acts as integral component of the N-Cor corepressor complex that mediates the recruitment of the 19S proteasome complex, leading to the subsequent proteasomal degradation of N-Cor complex, thereby allowing cofactor exchange, and transcription activation (By similarity).</text>
</comment>
<comment type="subunit">
    <text evidence="2 5">Component of the N-Cor repressor complex, at least composed of NCOR1, NCOR2, HDAC3, TBL1X, TBL1XR1, CORO2A and GPS2. Probable component of some E3 ubiquitin ligase complex. Interacts with histones H2B and H4 (By similarity). Interacts with MECP2; bridges interaction between MECP2 and NCOR1 (PubMed:28348241). Interacts with USP44 (By similarity).</text>
</comment>
<comment type="interaction">
    <interactant intactId="EBI-1216384">
        <id>Q8BHJ5</id>
    </interactant>
    <interactant intactId="EBI-1189067">
        <id>P51608</id>
        <label>MECP2</label>
    </interactant>
    <organismsDiffer>true</organismsDiffer>
    <experiments>4</experiments>
</comment>
<comment type="subcellular location">
    <subcellularLocation>
        <location evidence="1">Nucleus</location>
    </subcellularLocation>
</comment>
<comment type="domain">
    <text evidence="1">The F-box-like domain is related to the F-box domain, and apparently displays the same function as component of ubiquitin E3 ligase complexes.</text>
</comment>
<comment type="similarity">
    <text evidence="6">Belongs to the WD repeat EBI family.</text>
</comment>
<sequence>MSISSDEVNFLVYRYLQESGFSHSAFTFGIESHISQSNINGALVPPAALISIIQKGLQYVEAEVSINEDGTLFDGRPIESLSLIDAVMPDVVQTRQQAYRDKLAQQHAAAAAAAAAATNQQGSAKNGENTANGEENGAHTIANNHTDMMEVDGDVEIPSNKAVVLRGHESEVFICAWNPVSDLLASGSGDSTARIWNLSENSTSGPTQLVLRHCIREGGQDVPSNKDVTSLDWNSEGTLLATGSYDGFARIWTKDGNLASTLGQHKGPIFALKWNKKGNFILSAGVDKTTIIWDAHTGEAKQQFPFHSAPALDVDWQSNNTFASCSTDMCIHVCKLGQDRPIKTFQGHTNEVNAIKWDPTGNLLASCSDDMTLKIWSMKQDNCVHDLQAHNKEIYTIKWSPTGPGTNNPNANLMLASASFDSTVRLWDVDRGICIHTLTKHQEPVYSVAFSPDGRYLASGSFDKCVHIWNTQTGALVHSYRGTGGIFEVCWNAAGDKVGASASDGSVCVLDLRK</sequence>
<feature type="initiator methionine" description="Removed" evidence="2">
    <location>
        <position position="1"/>
    </location>
</feature>
<feature type="chain" id="PRO_0000051267" description="F-box-like/WD repeat-containing protein TBL1XR1">
    <location>
        <begin position="2"/>
        <end position="514"/>
    </location>
</feature>
<feature type="domain" description="LisH" evidence="3">
    <location>
        <begin position="4"/>
        <end position="36"/>
    </location>
</feature>
<feature type="domain" description="F-box-like">
    <location>
        <begin position="41"/>
        <end position="86"/>
    </location>
</feature>
<feature type="repeat" description="WD 1">
    <location>
        <begin position="167"/>
        <end position="206"/>
    </location>
</feature>
<feature type="repeat" description="WD 2">
    <location>
        <begin position="223"/>
        <end position="262"/>
    </location>
</feature>
<feature type="repeat" description="WD 3">
    <location>
        <begin position="264"/>
        <end position="303"/>
    </location>
</feature>
<feature type="repeat" description="WD 4">
    <location>
        <begin position="306"/>
        <end position="344"/>
    </location>
</feature>
<feature type="repeat" description="WD 5">
    <location>
        <begin position="347"/>
        <end position="386"/>
    </location>
</feature>
<feature type="repeat" description="WD 6">
    <location>
        <begin position="389"/>
        <end position="437"/>
    </location>
</feature>
<feature type="repeat" description="WD 7">
    <location>
        <begin position="440"/>
        <end position="479"/>
    </location>
</feature>
<feature type="repeat" description="WD 8">
    <location>
        <begin position="481"/>
        <end position="513"/>
    </location>
</feature>
<feature type="region of interest" description="Disordered" evidence="4">
    <location>
        <begin position="114"/>
        <end position="139"/>
    </location>
</feature>
<feature type="compositionally biased region" description="Low complexity" evidence="4">
    <location>
        <begin position="124"/>
        <end position="135"/>
    </location>
</feature>
<feature type="modified residue" description="N-acetylserine" evidence="2">
    <location>
        <position position="2"/>
    </location>
</feature>
<feature type="modified residue" description="N6-acetyllysine" evidence="8">
    <location>
        <position position="102"/>
    </location>
</feature>
<feature type="cross-link" description="Glycyl lysine isopeptide (Lys-Gly) (interchain with G-Cter in SUMO2)" evidence="2">
    <location>
        <position position="277"/>
    </location>
</feature>
<feature type="mutagenesis site" description="Significantly decreases interaction with MECP2." evidence="5">
    <original>E</original>
    <variation>A</variation>
    <location>
        <position position="171"/>
    </location>
</feature>
<feature type="mutagenesis site" description="Significantly decreases interaction with MECP2." evidence="5">
    <original>E</original>
    <variation>Q</variation>
    <location>
        <position position="171"/>
    </location>
</feature>
<feature type="mutagenesis site" description="Does not affect interaction with MECP2." evidence="5">
    <original>C</original>
    <variation>S</variation>
    <location>
        <position position="214"/>
    </location>
</feature>
<feature type="mutagenesis site" description="Abolishes interaction with MECP2." evidence="5">
    <original>D</original>
    <variation>N</variation>
    <location>
        <position position="313"/>
    </location>
</feature>
<feature type="mutagenesis site" description="Weakly decreases interaction with MECP2." evidence="5">
    <original>E</original>
    <variation>A</variation>
    <location>
        <position position="351"/>
    </location>
</feature>
<feature type="mutagenesis site" description="Does not affect interaction with MECP2." evidence="5">
    <original>E</original>
    <variation>D</variation>
    <location>
        <position position="351"/>
    </location>
</feature>
<feature type="mutagenesis site" description="Abolishes interaction with MECP2." evidence="5">
    <original>D</original>
    <variation>A</variation>
    <location>
        <position position="369"/>
    </location>
</feature>
<feature type="mutagenesis site" description="Substantially reduces interaction with MECP2." evidence="5">
    <original>D</original>
    <variation>E</variation>
    <location>
        <position position="369"/>
    </location>
</feature>
<feature type="mutagenesis site" description="Mildly affects interaction with MECP2." evidence="5">
    <original>P</original>
    <variation>R</variation>
    <location>
        <position position="444"/>
    </location>
</feature>
<feature type="mutagenesis site" description="Does not affect interaction with MECP2." evidence="5">
    <original>Y</original>
    <variation>F</variation>
    <location>
        <position position="446"/>
    </location>
</feature>
<feature type="sequence conflict" description="In Ref. 1; AAG44738." evidence="6" ref="1">
    <original>A</original>
    <variation>V</variation>
    <location>
        <position position="185"/>
    </location>
</feature>
<feature type="sequence conflict" description="In Ref. 2; BAC29294." evidence="6" ref="2">
    <original>K</original>
    <variation>R</variation>
    <location>
        <position position="374"/>
    </location>
</feature>
<feature type="sequence conflict" description="In Ref. 3; AAH18512." evidence="6" ref="3">
    <original>Y</original>
    <variation>C</variation>
    <location>
        <position position="480"/>
    </location>
</feature>
<feature type="helix" evidence="9">
    <location>
        <begin position="159"/>
        <end position="161"/>
    </location>
</feature>
<feature type="strand" evidence="9">
    <location>
        <begin position="162"/>
        <end position="165"/>
    </location>
</feature>
<feature type="strand" evidence="9">
    <location>
        <begin position="172"/>
        <end position="177"/>
    </location>
</feature>
<feature type="strand" evidence="9">
    <location>
        <begin position="179"/>
        <end position="188"/>
    </location>
</feature>
<feature type="strand" evidence="9">
    <location>
        <begin position="193"/>
        <end position="197"/>
    </location>
</feature>
<feature type="strand" evidence="9">
    <location>
        <begin position="207"/>
        <end position="211"/>
    </location>
</feature>
<feature type="strand" evidence="9">
    <location>
        <begin position="228"/>
        <end position="233"/>
    </location>
</feature>
<feature type="strand" evidence="9">
    <location>
        <begin position="237"/>
        <end position="244"/>
    </location>
</feature>
<feature type="strand" evidence="9">
    <location>
        <begin position="247"/>
        <end position="253"/>
    </location>
</feature>
<feature type="strand" evidence="9">
    <location>
        <begin position="258"/>
        <end position="264"/>
    </location>
</feature>
<feature type="strand" evidence="9">
    <location>
        <begin position="269"/>
        <end position="274"/>
    </location>
</feature>
<feature type="strand" evidence="9">
    <location>
        <begin position="276"/>
        <end position="285"/>
    </location>
</feature>
<feature type="strand" evidence="9">
    <location>
        <begin position="290"/>
        <end position="294"/>
    </location>
</feature>
<feature type="turn" evidence="9">
    <location>
        <begin position="295"/>
        <end position="297"/>
    </location>
</feature>
<feature type="strand" evidence="9">
    <location>
        <begin position="299"/>
        <end position="304"/>
    </location>
</feature>
<feature type="strand" evidence="9">
    <location>
        <begin position="311"/>
        <end position="326"/>
    </location>
</feature>
<feature type="strand" evidence="9">
    <location>
        <begin position="329"/>
        <end position="335"/>
    </location>
</feature>
<feature type="strand" evidence="9">
    <location>
        <begin position="342"/>
        <end position="346"/>
    </location>
</feature>
<feature type="strand" evidence="9">
    <location>
        <begin position="352"/>
        <end position="357"/>
    </location>
</feature>
<feature type="strand" evidence="9">
    <location>
        <begin position="364"/>
        <end position="368"/>
    </location>
</feature>
<feature type="strand" evidence="9">
    <location>
        <begin position="373"/>
        <end position="376"/>
    </location>
</feature>
<feature type="strand" evidence="9">
    <location>
        <begin position="384"/>
        <end position="387"/>
    </location>
</feature>
<feature type="strand" evidence="9">
    <location>
        <begin position="394"/>
        <end position="399"/>
    </location>
</feature>
<feature type="strand" evidence="9">
    <location>
        <begin position="403"/>
        <end position="407"/>
    </location>
</feature>
<feature type="strand" evidence="9">
    <location>
        <begin position="414"/>
        <end position="419"/>
    </location>
</feature>
<feature type="strand" evidence="9">
    <location>
        <begin position="424"/>
        <end position="428"/>
    </location>
</feature>
<feature type="turn" evidence="9">
    <location>
        <begin position="429"/>
        <end position="432"/>
    </location>
</feature>
<feature type="strand" evidence="9">
    <location>
        <begin position="433"/>
        <end position="438"/>
    </location>
</feature>
<feature type="strand" evidence="9">
    <location>
        <begin position="445"/>
        <end position="450"/>
    </location>
</feature>
<feature type="strand" evidence="9">
    <location>
        <begin position="454"/>
        <end position="461"/>
    </location>
</feature>
<feature type="strand" evidence="9">
    <location>
        <begin position="464"/>
        <end position="470"/>
    </location>
</feature>
<feature type="turn" evidence="9">
    <location>
        <begin position="471"/>
        <end position="473"/>
    </location>
</feature>
<feature type="strand" evidence="9">
    <location>
        <begin position="476"/>
        <end position="481"/>
    </location>
</feature>
<feature type="strand" evidence="9">
    <location>
        <begin position="486"/>
        <end position="491"/>
    </location>
</feature>
<feature type="strand" evidence="9">
    <location>
        <begin position="493"/>
        <end position="502"/>
    </location>
</feature>
<feature type="strand" evidence="9">
    <location>
        <begin position="507"/>
        <end position="511"/>
    </location>
</feature>
<organism>
    <name type="scientific">Mus musculus</name>
    <name type="common">Mouse</name>
    <dbReference type="NCBI Taxonomy" id="10090"/>
    <lineage>
        <taxon>Eukaryota</taxon>
        <taxon>Metazoa</taxon>
        <taxon>Chordata</taxon>
        <taxon>Craniata</taxon>
        <taxon>Vertebrata</taxon>
        <taxon>Euteleostomi</taxon>
        <taxon>Mammalia</taxon>
        <taxon>Eutheria</taxon>
        <taxon>Euarchontoglires</taxon>
        <taxon>Glires</taxon>
        <taxon>Rodentia</taxon>
        <taxon>Myomorpha</taxon>
        <taxon>Muroidea</taxon>
        <taxon>Muridae</taxon>
        <taxon>Murinae</taxon>
        <taxon>Mus</taxon>
        <taxon>Mus</taxon>
    </lineage>
</organism>
<protein>
    <recommendedName>
        <fullName>F-box-like/WD repeat-containing protein TBL1XR1</fullName>
    </recommendedName>
    <alternativeName>
        <fullName>Nuclear receptor corepressor/HDAC3 complex subunit TBLR1</fullName>
    </alternativeName>
    <alternativeName>
        <fullName>TBL1-related protein 1</fullName>
    </alternativeName>
    <alternativeName>
        <fullName>Transducin beta-like 1X-related protein 1</fullName>
    </alternativeName>
</protein>
<evidence type="ECO:0000250" key="1"/>
<evidence type="ECO:0000250" key="2">
    <source>
        <dbReference type="UniProtKB" id="Q9BZK7"/>
    </source>
</evidence>
<evidence type="ECO:0000255" key="3">
    <source>
        <dbReference type="PROSITE-ProRule" id="PRU00126"/>
    </source>
</evidence>
<evidence type="ECO:0000256" key="4">
    <source>
        <dbReference type="SAM" id="MobiDB-lite"/>
    </source>
</evidence>
<evidence type="ECO:0000269" key="5">
    <source>
    </source>
</evidence>
<evidence type="ECO:0000305" key="6"/>
<evidence type="ECO:0007744" key="7">
    <source>
        <dbReference type="PDB" id="5NAF"/>
    </source>
</evidence>
<evidence type="ECO:0007744" key="8">
    <source>
    </source>
</evidence>
<evidence type="ECO:0007829" key="9">
    <source>
        <dbReference type="PDB" id="5NAF"/>
    </source>
</evidence>
<accession>Q8BHJ5</accession>
<accession>Q3UWL6</accession>
<accession>Q8CBG4</accession>
<accession>Q8VEG3</accession>
<accession>Q9EQD4</accession>
<reference key="1">
    <citation type="journal article" date="2000" name="Exp. Hematol.">
        <title>Identification of four human cDNAs that are differentially expressed by early hematopoietic progenitors.</title>
        <authorList>
            <person name="Zhang X."/>
            <person name="Dormady S.P."/>
            <person name="Basch R.S."/>
        </authorList>
    </citation>
    <scope>NUCLEOTIDE SEQUENCE [MRNA]</scope>
    <source>
        <strain>BALB/cJ</strain>
    </source>
</reference>
<reference key="2">
    <citation type="journal article" date="2005" name="Science">
        <title>The transcriptional landscape of the mammalian genome.</title>
        <authorList>
            <person name="Carninci P."/>
            <person name="Kasukawa T."/>
            <person name="Katayama S."/>
            <person name="Gough J."/>
            <person name="Frith M.C."/>
            <person name="Maeda N."/>
            <person name="Oyama R."/>
            <person name="Ravasi T."/>
            <person name="Lenhard B."/>
            <person name="Wells C."/>
            <person name="Kodzius R."/>
            <person name="Shimokawa K."/>
            <person name="Bajic V.B."/>
            <person name="Brenner S.E."/>
            <person name="Batalov S."/>
            <person name="Forrest A.R."/>
            <person name="Zavolan M."/>
            <person name="Davis M.J."/>
            <person name="Wilming L.G."/>
            <person name="Aidinis V."/>
            <person name="Allen J.E."/>
            <person name="Ambesi-Impiombato A."/>
            <person name="Apweiler R."/>
            <person name="Aturaliya R.N."/>
            <person name="Bailey T.L."/>
            <person name="Bansal M."/>
            <person name="Baxter L."/>
            <person name="Beisel K.W."/>
            <person name="Bersano T."/>
            <person name="Bono H."/>
            <person name="Chalk A.M."/>
            <person name="Chiu K.P."/>
            <person name="Choudhary V."/>
            <person name="Christoffels A."/>
            <person name="Clutterbuck D.R."/>
            <person name="Crowe M.L."/>
            <person name="Dalla E."/>
            <person name="Dalrymple B.P."/>
            <person name="de Bono B."/>
            <person name="Della Gatta G."/>
            <person name="di Bernardo D."/>
            <person name="Down T."/>
            <person name="Engstrom P."/>
            <person name="Fagiolini M."/>
            <person name="Faulkner G."/>
            <person name="Fletcher C.F."/>
            <person name="Fukushima T."/>
            <person name="Furuno M."/>
            <person name="Futaki S."/>
            <person name="Gariboldi M."/>
            <person name="Georgii-Hemming P."/>
            <person name="Gingeras T.R."/>
            <person name="Gojobori T."/>
            <person name="Green R.E."/>
            <person name="Gustincich S."/>
            <person name="Harbers M."/>
            <person name="Hayashi Y."/>
            <person name="Hensch T.K."/>
            <person name="Hirokawa N."/>
            <person name="Hill D."/>
            <person name="Huminiecki L."/>
            <person name="Iacono M."/>
            <person name="Ikeo K."/>
            <person name="Iwama A."/>
            <person name="Ishikawa T."/>
            <person name="Jakt M."/>
            <person name="Kanapin A."/>
            <person name="Katoh M."/>
            <person name="Kawasawa Y."/>
            <person name="Kelso J."/>
            <person name="Kitamura H."/>
            <person name="Kitano H."/>
            <person name="Kollias G."/>
            <person name="Krishnan S.P."/>
            <person name="Kruger A."/>
            <person name="Kummerfeld S.K."/>
            <person name="Kurochkin I.V."/>
            <person name="Lareau L.F."/>
            <person name="Lazarevic D."/>
            <person name="Lipovich L."/>
            <person name="Liu J."/>
            <person name="Liuni S."/>
            <person name="McWilliam S."/>
            <person name="Madan Babu M."/>
            <person name="Madera M."/>
            <person name="Marchionni L."/>
            <person name="Matsuda H."/>
            <person name="Matsuzawa S."/>
            <person name="Miki H."/>
            <person name="Mignone F."/>
            <person name="Miyake S."/>
            <person name="Morris K."/>
            <person name="Mottagui-Tabar S."/>
            <person name="Mulder N."/>
            <person name="Nakano N."/>
            <person name="Nakauchi H."/>
            <person name="Ng P."/>
            <person name="Nilsson R."/>
            <person name="Nishiguchi S."/>
            <person name="Nishikawa S."/>
            <person name="Nori F."/>
            <person name="Ohara O."/>
            <person name="Okazaki Y."/>
            <person name="Orlando V."/>
            <person name="Pang K.C."/>
            <person name="Pavan W.J."/>
            <person name="Pavesi G."/>
            <person name="Pesole G."/>
            <person name="Petrovsky N."/>
            <person name="Piazza S."/>
            <person name="Reed J."/>
            <person name="Reid J.F."/>
            <person name="Ring B.Z."/>
            <person name="Ringwald M."/>
            <person name="Rost B."/>
            <person name="Ruan Y."/>
            <person name="Salzberg S.L."/>
            <person name="Sandelin A."/>
            <person name="Schneider C."/>
            <person name="Schoenbach C."/>
            <person name="Sekiguchi K."/>
            <person name="Semple C.A."/>
            <person name="Seno S."/>
            <person name="Sessa L."/>
            <person name="Sheng Y."/>
            <person name="Shibata Y."/>
            <person name="Shimada H."/>
            <person name="Shimada K."/>
            <person name="Silva D."/>
            <person name="Sinclair B."/>
            <person name="Sperling S."/>
            <person name="Stupka E."/>
            <person name="Sugiura K."/>
            <person name="Sultana R."/>
            <person name="Takenaka Y."/>
            <person name="Taki K."/>
            <person name="Tammoja K."/>
            <person name="Tan S.L."/>
            <person name="Tang S."/>
            <person name="Taylor M.S."/>
            <person name="Tegner J."/>
            <person name="Teichmann S.A."/>
            <person name="Ueda H.R."/>
            <person name="van Nimwegen E."/>
            <person name="Verardo R."/>
            <person name="Wei C.L."/>
            <person name="Yagi K."/>
            <person name="Yamanishi H."/>
            <person name="Zabarovsky E."/>
            <person name="Zhu S."/>
            <person name="Zimmer A."/>
            <person name="Hide W."/>
            <person name="Bult C."/>
            <person name="Grimmond S.M."/>
            <person name="Teasdale R.D."/>
            <person name="Liu E.T."/>
            <person name="Brusic V."/>
            <person name="Quackenbush J."/>
            <person name="Wahlestedt C."/>
            <person name="Mattick J.S."/>
            <person name="Hume D.A."/>
            <person name="Kai C."/>
            <person name="Sasaki D."/>
            <person name="Tomaru Y."/>
            <person name="Fukuda S."/>
            <person name="Kanamori-Katayama M."/>
            <person name="Suzuki M."/>
            <person name="Aoki J."/>
            <person name="Arakawa T."/>
            <person name="Iida J."/>
            <person name="Imamura K."/>
            <person name="Itoh M."/>
            <person name="Kato T."/>
            <person name="Kawaji H."/>
            <person name="Kawagashira N."/>
            <person name="Kawashima T."/>
            <person name="Kojima M."/>
            <person name="Kondo S."/>
            <person name="Konno H."/>
            <person name="Nakano K."/>
            <person name="Ninomiya N."/>
            <person name="Nishio T."/>
            <person name="Okada M."/>
            <person name="Plessy C."/>
            <person name="Shibata K."/>
            <person name="Shiraki T."/>
            <person name="Suzuki S."/>
            <person name="Tagami M."/>
            <person name="Waki K."/>
            <person name="Watahiki A."/>
            <person name="Okamura-Oho Y."/>
            <person name="Suzuki H."/>
            <person name="Kawai J."/>
            <person name="Hayashizaki Y."/>
        </authorList>
    </citation>
    <scope>NUCLEOTIDE SEQUENCE [LARGE SCALE MRNA]</scope>
    <source>
        <strain>C57BL/6J</strain>
        <tissue>Cerebellum</tissue>
        <tissue>Egg</tissue>
        <tissue>Testis</tissue>
    </source>
</reference>
<reference key="3">
    <citation type="journal article" date="2004" name="Genome Res.">
        <title>The status, quality, and expansion of the NIH full-length cDNA project: the Mammalian Gene Collection (MGC).</title>
        <authorList>
            <consortium name="The MGC Project Team"/>
        </authorList>
    </citation>
    <scope>NUCLEOTIDE SEQUENCE [LARGE SCALE MRNA] OF 314-514</scope>
    <source>
        <tissue>Mammary tumor</tissue>
    </source>
</reference>
<reference key="4">
    <citation type="journal article" date="2010" name="Cell">
        <title>A tissue-specific atlas of mouse protein phosphorylation and expression.</title>
        <authorList>
            <person name="Huttlin E.L."/>
            <person name="Jedrychowski M.P."/>
            <person name="Elias J.E."/>
            <person name="Goswami T."/>
            <person name="Rad R."/>
            <person name="Beausoleil S.A."/>
            <person name="Villen J."/>
            <person name="Haas W."/>
            <person name="Sowa M.E."/>
            <person name="Gygi S.P."/>
        </authorList>
    </citation>
    <scope>IDENTIFICATION BY MASS SPECTROMETRY [LARGE SCALE ANALYSIS]</scope>
    <source>
        <tissue>Spleen</tissue>
        <tissue>Testis</tissue>
    </source>
</reference>
<reference key="5">
    <citation type="journal article" date="2013" name="Mol. Cell">
        <title>SIRT5-mediated lysine desuccinylation impacts diverse metabolic pathways.</title>
        <authorList>
            <person name="Park J."/>
            <person name="Chen Y."/>
            <person name="Tishkoff D.X."/>
            <person name="Peng C."/>
            <person name="Tan M."/>
            <person name="Dai L."/>
            <person name="Xie Z."/>
            <person name="Zhang Y."/>
            <person name="Zwaans B.M."/>
            <person name="Skinner M.E."/>
            <person name="Lombard D.B."/>
            <person name="Zhao Y."/>
        </authorList>
    </citation>
    <scope>ACETYLATION [LARGE SCALE ANALYSIS] AT LYS-102</scope>
    <scope>IDENTIFICATION BY MASS SPECTROMETRY [LARGE SCALE ANALYSIS]</scope>
    <source>
        <tissue>Embryonic fibroblast</tissue>
    </source>
</reference>
<reference evidence="7" key="6">
    <citation type="journal article" date="2017" name="Proc. Natl. Acad. Sci. U.S.A.">
        <title>Structure of the MeCP2-TBLR1 complex reveals a molecular basis for Rett syndrome and related disorders.</title>
        <authorList>
            <person name="Kruusvee V."/>
            <person name="Lyst M.J."/>
            <person name="Taylor C."/>
            <person name="Tarnauskaite Z."/>
            <person name="Bird A.P."/>
            <person name="Cook A.G."/>
        </authorList>
    </citation>
    <scope>X-RAY CRYSTALLOGRAPHY (2.49 ANGSTROMS) OF 134-514 IN COMPLEX WITH MECP2</scope>
    <scope>MUTAGENESIS OF GLU-171; CYS-214; ASP-313; GLU-351; ASP-369; PRO-444 AND TYR-446</scope>
</reference>
<keyword id="KW-0002">3D-structure</keyword>
<keyword id="KW-0007">Acetylation</keyword>
<keyword id="KW-0010">Activator</keyword>
<keyword id="KW-0156">Chromatin regulator</keyword>
<keyword id="KW-1017">Isopeptide bond</keyword>
<keyword id="KW-0539">Nucleus</keyword>
<keyword id="KW-1185">Reference proteome</keyword>
<keyword id="KW-0677">Repeat</keyword>
<keyword id="KW-0678">Repressor</keyword>
<keyword id="KW-0804">Transcription</keyword>
<keyword id="KW-0805">Transcription regulation</keyword>
<keyword id="KW-0832">Ubl conjugation</keyword>
<keyword id="KW-0833">Ubl conjugation pathway</keyword>
<keyword id="KW-0853">WD repeat</keyword>